<feature type="chain" id="PRO_0000051523" description="Mitochondrial import receptor subunit TOM40 homolog">
    <location>
        <begin position="1"/>
        <end position="361"/>
    </location>
</feature>
<feature type="region of interest" description="Disordered" evidence="3">
    <location>
        <begin position="1"/>
        <end position="71"/>
    </location>
</feature>
<feature type="compositionally biased region" description="Low complexity" evidence="3">
    <location>
        <begin position="1"/>
        <end position="10"/>
    </location>
</feature>
<feature type="compositionally biased region" description="Pro residues" evidence="3">
    <location>
        <begin position="11"/>
        <end position="36"/>
    </location>
</feature>
<feature type="compositionally biased region" description="Low complexity" evidence="3">
    <location>
        <begin position="37"/>
        <end position="52"/>
    </location>
</feature>
<feature type="compositionally biased region" description="Low complexity" evidence="3">
    <location>
        <begin position="59"/>
        <end position="71"/>
    </location>
</feature>
<feature type="splice variant" id="VSP_008589" description="In isoform 2." evidence="9">
    <original>SVDSNWIVGATLE</original>
    <variation>KGLGSPTRETGRR</variation>
    <location>
        <begin position="317"/>
        <end position="329"/>
    </location>
</feature>
<feature type="splice variant" id="VSP_008590" description="In isoform 2." evidence="9">
    <location>
        <begin position="330"/>
        <end position="361"/>
    </location>
</feature>
<feature type="sequence conflict" description="In Ref. 5; AAH06413." evidence="10" ref="5">
    <original>S</original>
    <variation>R</variation>
    <location>
        <position position="49"/>
    </location>
</feature>
<feature type="sequence conflict" description="In Ref. 3; AAL46625." evidence="10" ref="3">
    <original>A</original>
    <variation>S</variation>
    <location>
        <position position="219"/>
    </location>
</feature>
<feature type="sequence conflict" description="In Ref. 3; AAL46624." evidence="10" ref="3">
    <original>H</original>
    <variation>R</variation>
    <location>
        <position position="220"/>
    </location>
</feature>
<feature type="sequence conflict" description="In Ref. 3; AAL46626." evidence="10" ref="3">
    <original>N</original>
    <variation>S</variation>
    <location>
        <position position="258"/>
    </location>
</feature>
<feature type="sequence conflict" description="In Ref. 3; AAL46626." evidence="10" ref="3">
    <original>T</original>
    <variation>A</variation>
    <location>
        <position position="297"/>
    </location>
</feature>
<feature type="sequence conflict" description="In Ref. 3; AAL46624." evidence="10" ref="3">
    <original>L</original>
    <variation>F</variation>
    <location>
        <position position="313"/>
    </location>
</feature>
<feature type="helix" evidence="13">
    <location>
        <begin position="83"/>
        <end position="85"/>
    </location>
</feature>
<feature type="helix" evidence="13">
    <location>
        <begin position="88"/>
        <end position="91"/>
    </location>
</feature>
<feature type="strand" evidence="13">
    <location>
        <begin position="100"/>
        <end position="121"/>
    </location>
</feature>
<feature type="strand" evidence="13">
    <location>
        <begin position="123"/>
        <end position="125"/>
    </location>
</feature>
<feature type="strand" evidence="13">
    <location>
        <begin position="128"/>
        <end position="139"/>
    </location>
</feature>
<feature type="strand" evidence="13">
    <location>
        <begin position="141"/>
        <end position="144"/>
    </location>
</feature>
<feature type="strand" evidence="13">
    <location>
        <begin position="147"/>
        <end position="155"/>
    </location>
</feature>
<feature type="strand" evidence="11">
    <location>
        <begin position="156"/>
        <end position="158"/>
    </location>
</feature>
<feature type="strand" evidence="13">
    <location>
        <begin position="160"/>
        <end position="169"/>
    </location>
</feature>
<feature type="strand" evidence="13">
    <location>
        <begin position="172"/>
        <end position="183"/>
    </location>
</feature>
<feature type="strand" evidence="13">
    <location>
        <begin position="185"/>
        <end position="195"/>
    </location>
</feature>
<feature type="strand" evidence="13">
    <location>
        <begin position="197"/>
        <end position="209"/>
    </location>
</feature>
<feature type="turn" evidence="13">
    <location>
        <begin position="210"/>
        <end position="213"/>
    </location>
</feature>
<feature type="strand" evidence="13">
    <location>
        <begin position="214"/>
        <end position="240"/>
    </location>
</feature>
<feature type="strand" evidence="13">
    <location>
        <begin position="243"/>
        <end position="255"/>
    </location>
</feature>
<feature type="strand" evidence="13">
    <location>
        <begin position="257"/>
        <end position="277"/>
    </location>
</feature>
<feature type="strand" evidence="13">
    <location>
        <begin position="279"/>
        <end position="291"/>
    </location>
</feature>
<feature type="turn" evidence="13">
    <location>
        <begin position="292"/>
        <end position="295"/>
    </location>
</feature>
<feature type="strand" evidence="13">
    <location>
        <begin position="296"/>
        <end position="307"/>
    </location>
</feature>
<feature type="helix" evidence="13">
    <location>
        <begin position="308"/>
        <end position="310"/>
    </location>
</feature>
<feature type="strand" evidence="13">
    <location>
        <begin position="312"/>
        <end position="319"/>
    </location>
</feature>
<feature type="turn" evidence="13">
    <location>
        <begin position="320"/>
        <end position="322"/>
    </location>
</feature>
<feature type="strand" evidence="13">
    <location>
        <begin position="323"/>
        <end position="331"/>
    </location>
</feature>
<feature type="turn" evidence="12">
    <location>
        <begin position="333"/>
        <end position="336"/>
    </location>
</feature>
<feature type="strand" evidence="13">
    <location>
        <begin position="338"/>
        <end position="346"/>
    </location>
</feature>
<feature type="turn" evidence="13">
    <location>
        <begin position="347"/>
        <end position="350"/>
    </location>
</feature>
<feature type="strand" evidence="13">
    <location>
        <begin position="351"/>
        <end position="359"/>
    </location>
</feature>
<sequence length="361" mass="37893">MGNVLAASSPPAGPPPPPAPALVGLPPPPPSPPGFTLPPLGGSLGAGTSTSRSSERTPGAATASASGAAEDGACGCLPNPGTFEECHRKCKELFPIQMEGVKLTVNKGLSNHFQVNHTVALSTIGESNYHFGVTYVGTKQLSPTEAFPVLVGDMDNSGSLNAQVIHQLGPGLRSKMAIQTQQSKFVNWQVDGEYRGSDFTAAVTLGNPDVLVGSGILVAHYLQSITPCLALGGELVYHRRPGEEGTVMSLAGKYTLNNWLATVTLGQAGMHATYYHKASDQLQVGVEFEASTRMQDTSVSFGYQLDLPKANLLFKGSVDSNWIVGATLEKKLPPLPLTLALGAFLNHRKNKFQCGFGLTIG</sequence>
<dbReference type="EMBL" id="AF050154">
    <property type="protein sequence ID" value="AAD02504.1"/>
    <property type="molecule type" value="Genomic_DNA"/>
</dbReference>
<dbReference type="EMBL" id="AF043250">
    <property type="protein sequence ID" value="AAC82342.1"/>
    <property type="molecule type" value="mRNA"/>
</dbReference>
<dbReference type="EMBL" id="AF043253">
    <property type="protein sequence ID" value="AAC82343.1"/>
    <property type="molecule type" value="Genomic_DNA"/>
</dbReference>
<dbReference type="EMBL" id="AF043251">
    <property type="protein sequence ID" value="AAC82343.1"/>
    <property type="status" value="JOINED"/>
    <property type="molecule type" value="Genomic_DNA"/>
</dbReference>
<dbReference type="EMBL" id="AF043252">
    <property type="protein sequence ID" value="AAC82343.1"/>
    <property type="status" value="JOINED"/>
    <property type="molecule type" value="Genomic_DNA"/>
</dbReference>
<dbReference type="EMBL" id="AF316398">
    <property type="protein sequence ID" value="AAL46624.1"/>
    <property type="molecule type" value="mRNA"/>
</dbReference>
<dbReference type="EMBL" id="AF316399">
    <property type="protein sequence ID" value="AAL46625.1"/>
    <property type="molecule type" value="mRNA"/>
</dbReference>
<dbReference type="EMBL" id="AF316401">
    <property type="protein sequence ID" value="AAL46626.1"/>
    <property type="molecule type" value="mRNA"/>
</dbReference>
<dbReference type="EMBL" id="AF316402">
    <property type="protein sequence ID" value="AAL46627.1"/>
    <property type="molecule type" value="mRNA"/>
</dbReference>
<dbReference type="EMBL" id="CH471126">
    <property type="protein sequence ID" value="EAW57302.1"/>
    <property type="molecule type" value="Genomic_DNA"/>
</dbReference>
<dbReference type="EMBL" id="CH471126">
    <property type="protein sequence ID" value="EAW57304.1"/>
    <property type="molecule type" value="Genomic_DNA"/>
</dbReference>
<dbReference type="EMBL" id="CH471126">
    <property type="protein sequence ID" value="EAW57305.1"/>
    <property type="molecule type" value="Genomic_DNA"/>
</dbReference>
<dbReference type="EMBL" id="BC001779">
    <property type="protein sequence ID" value="AAH01779.1"/>
    <property type="molecule type" value="mRNA"/>
</dbReference>
<dbReference type="EMBL" id="BC006413">
    <property type="protein sequence ID" value="AAH06413.1"/>
    <property type="molecule type" value="mRNA"/>
</dbReference>
<dbReference type="EMBL" id="BC012134">
    <property type="protein sequence ID" value="AAH12134.1"/>
    <property type="molecule type" value="mRNA"/>
</dbReference>
<dbReference type="EMBL" id="BC017224">
    <property type="protein sequence ID" value="AAH17224.1"/>
    <property type="molecule type" value="mRNA"/>
</dbReference>
<dbReference type="EMBL" id="BC047528">
    <property type="protein sequence ID" value="AAH47528.1"/>
    <property type="molecule type" value="mRNA"/>
</dbReference>
<dbReference type="CCDS" id="CCDS12646.1">
    <molecule id="O96008-1"/>
</dbReference>
<dbReference type="RefSeq" id="NP_001122388.1">
    <molecule id="O96008-1"/>
    <property type="nucleotide sequence ID" value="NM_001128916.2"/>
</dbReference>
<dbReference type="RefSeq" id="NP_001122389.1">
    <molecule id="O96008-1"/>
    <property type="nucleotide sequence ID" value="NM_001128917.2"/>
</dbReference>
<dbReference type="RefSeq" id="NP_006105.1">
    <molecule id="O96008-1"/>
    <property type="nucleotide sequence ID" value="NM_006114.3"/>
</dbReference>
<dbReference type="PDB" id="7CK6">
    <property type="method" value="EM"/>
    <property type="resolution" value="3.40 A"/>
    <property type="chains" value="A/B=1-361"/>
</dbReference>
<dbReference type="PDB" id="7CP9">
    <property type="method" value="EM"/>
    <property type="resolution" value="3.00 A"/>
    <property type="chains" value="I/J=1-361"/>
</dbReference>
<dbReference type="PDB" id="7VBY">
    <property type="method" value="EM"/>
    <property type="resolution" value="2.54 A"/>
    <property type="chains" value="B/I=1-361"/>
</dbReference>
<dbReference type="PDB" id="7VC4">
    <property type="method" value="EM"/>
    <property type="resolution" value="3.74 A"/>
    <property type="chains" value="B/I=1-361"/>
</dbReference>
<dbReference type="PDB" id="7VD2">
    <property type="method" value="EM"/>
    <property type="resolution" value="2.53 A"/>
    <property type="chains" value="B/I=1-361"/>
</dbReference>
<dbReference type="PDB" id="7VDD">
    <property type="method" value="EM"/>
    <property type="resolution" value="3.74 A"/>
    <property type="chains" value="B/I=1-361"/>
</dbReference>
<dbReference type="PDB" id="8XVA">
    <property type="method" value="EM"/>
    <property type="resolution" value="5.92 A"/>
    <property type="chains" value="B/I=1-361"/>
</dbReference>
<dbReference type="PDB" id="9EIH">
    <property type="method" value="EM"/>
    <property type="resolution" value="3.10 A"/>
    <property type="chains" value="G/H/I/J=1-361"/>
</dbReference>
<dbReference type="PDB" id="9EII">
    <property type="method" value="EM"/>
    <property type="resolution" value="2.75 A"/>
    <property type="chains" value="I/J=1-361"/>
</dbReference>
<dbReference type="PDB" id="9EIJ">
    <property type="method" value="EM"/>
    <property type="resolution" value="3.30 A"/>
    <property type="chains" value="I/J=1-361"/>
</dbReference>
<dbReference type="PDBsum" id="7CK6"/>
<dbReference type="PDBsum" id="7CP9"/>
<dbReference type="PDBsum" id="7VBY"/>
<dbReference type="PDBsum" id="7VC4"/>
<dbReference type="PDBsum" id="7VD2"/>
<dbReference type="PDBsum" id="7VDD"/>
<dbReference type="PDBsum" id="8XVA"/>
<dbReference type="PDBsum" id="9EIH"/>
<dbReference type="PDBsum" id="9EII"/>
<dbReference type="PDBsum" id="9EIJ"/>
<dbReference type="EMDB" id="EMD-30382"/>
<dbReference type="EMDB" id="EMD-30421"/>
<dbReference type="EMDB" id="EMD-31885"/>
<dbReference type="EMDB" id="EMD-31888"/>
<dbReference type="EMDB" id="EMD-31904"/>
<dbReference type="EMDB" id="EMD-31914"/>
<dbReference type="EMDB" id="EMD-38694"/>
<dbReference type="EMDB" id="EMD-48083"/>
<dbReference type="EMDB" id="EMD-48084"/>
<dbReference type="EMDB" id="EMD-48085"/>
<dbReference type="SMR" id="O96008"/>
<dbReference type="BioGRID" id="115716">
    <property type="interactions" value="341"/>
</dbReference>
<dbReference type="ComplexPortal" id="CPX-6121">
    <property type="entry name" value="TOM40 mitochondrial outer membrane translocase complex"/>
</dbReference>
<dbReference type="CORUM" id="O96008"/>
<dbReference type="FunCoup" id="O96008">
    <property type="interactions" value="2150"/>
</dbReference>
<dbReference type="IntAct" id="O96008">
    <property type="interactions" value="104"/>
</dbReference>
<dbReference type="MINT" id="O96008"/>
<dbReference type="STRING" id="9606.ENSP00000410339"/>
<dbReference type="ChEMBL" id="CHEMBL4523158"/>
<dbReference type="TCDB" id="1.B.8.2.5">
    <property type="family name" value="the mitochondrial and plastid porin (mpp) family"/>
</dbReference>
<dbReference type="GlyGen" id="O96008">
    <property type="glycosylation" value="2 sites, 1 O-linked glycan (2 sites)"/>
</dbReference>
<dbReference type="iPTMnet" id="O96008"/>
<dbReference type="MetOSite" id="O96008"/>
<dbReference type="PhosphoSitePlus" id="O96008"/>
<dbReference type="SwissPalm" id="O96008"/>
<dbReference type="BioMuta" id="TOMM40"/>
<dbReference type="REPRODUCTION-2DPAGE" id="IPI00014053"/>
<dbReference type="jPOST" id="O96008"/>
<dbReference type="MassIVE" id="O96008"/>
<dbReference type="PaxDb" id="9606-ENSP00000410339"/>
<dbReference type="PeptideAtlas" id="O96008"/>
<dbReference type="ProteomicsDB" id="51187">
    <molecule id="O96008-1"/>
</dbReference>
<dbReference type="ProteomicsDB" id="51188">
    <molecule id="O96008-2"/>
</dbReference>
<dbReference type="Pumba" id="O96008"/>
<dbReference type="TopDownProteomics" id="O96008-1">
    <molecule id="O96008-1"/>
</dbReference>
<dbReference type="Antibodypedia" id="3972">
    <property type="antibodies" value="165 antibodies from 34 providers"/>
</dbReference>
<dbReference type="DNASU" id="10452"/>
<dbReference type="Ensembl" id="ENST00000252487.9">
    <molecule id="O96008-1"/>
    <property type="protein sequence ID" value="ENSP00000252487.4"/>
    <property type="gene ID" value="ENSG00000130204.13"/>
</dbReference>
<dbReference type="Ensembl" id="ENST00000405636.6">
    <molecule id="O96008-1"/>
    <property type="protein sequence ID" value="ENSP00000385184.2"/>
    <property type="gene ID" value="ENSG00000130204.13"/>
</dbReference>
<dbReference type="Ensembl" id="ENST00000426677.7">
    <molecule id="O96008-1"/>
    <property type="protein sequence ID" value="ENSP00000410339.1"/>
    <property type="gene ID" value="ENSG00000130204.13"/>
</dbReference>
<dbReference type="Ensembl" id="ENST00000592434.5">
    <molecule id="O96008-2"/>
    <property type="protein sequence ID" value="ENSP00000466084.1"/>
    <property type="gene ID" value="ENSG00000130204.13"/>
</dbReference>
<dbReference type="GeneID" id="10452"/>
<dbReference type="KEGG" id="hsa:10452"/>
<dbReference type="MANE-Select" id="ENST00000426677.7">
    <property type="protein sequence ID" value="ENSP00000410339.1"/>
    <property type="RefSeq nucleotide sequence ID" value="NM_001128917.2"/>
    <property type="RefSeq protein sequence ID" value="NP_001122389.1"/>
</dbReference>
<dbReference type="UCSC" id="uc002ozx.4">
    <molecule id="O96008-1"/>
    <property type="organism name" value="human"/>
</dbReference>
<dbReference type="AGR" id="HGNC:18001"/>
<dbReference type="CTD" id="10452"/>
<dbReference type="DisGeNET" id="10452"/>
<dbReference type="GeneCards" id="TOMM40"/>
<dbReference type="HGNC" id="HGNC:18001">
    <property type="gene designation" value="TOMM40"/>
</dbReference>
<dbReference type="HPA" id="ENSG00000130204">
    <property type="expression patterns" value="Low tissue specificity"/>
</dbReference>
<dbReference type="MalaCards" id="TOMM40"/>
<dbReference type="MIM" id="608061">
    <property type="type" value="gene"/>
</dbReference>
<dbReference type="neXtProt" id="NX_O96008"/>
<dbReference type="OpenTargets" id="ENSG00000130204"/>
<dbReference type="Orphanet" id="1020">
    <property type="disease" value="Early-onset autosomal dominant Alzheimer disease"/>
</dbReference>
<dbReference type="PharmGKB" id="PA38274"/>
<dbReference type="VEuPathDB" id="HostDB:ENSG00000130204"/>
<dbReference type="eggNOG" id="KOG3296">
    <property type="taxonomic scope" value="Eukaryota"/>
</dbReference>
<dbReference type="GeneTree" id="ENSGT00390000003308"/>
<dbReference type="HOGENOM" id="CLU_054399_0_0_1"/>
<dbReference type="InParanoid" id="O96008"/>
<dbReference type="OMA" id="TRFNYRW"/>
<dbReference type="OrthoDB" id="19656at2759"/>
<dbReference type="PAN-GO" id="O96008">
    <property type="GO annotations" value="3 GO annotations based on evolutionary models"/>
</dbReference>
<dbReference type="PhylomeDB" id="O96008"/>
<dbReference type="TreeFam" id="TF106204"/>
<dbReference type="PathwayCommons" id="O96008"/>
<dbReference type="Reactome" id="R-HSA-1268020">
    <property type="pathway name" value="Mitochondrial protein import"/>
</dbReference>
<dbReference type="Reactome" id="R-HSA-5205685">
    <property type="pathway name" value="PINK1-PRKN Mediated Mitophagy"/>
</dbReference>
<dbReference type="SignaLink" id="O96008"/>
<dbReference type="SIGNOR" id="O96008"/>
<dbReference type="BioGRID-ORCS" id="10452">
    <property type="hits" value="780 hits in 1166 CRISPR screens"/>
</dbReference>
<dbReference type="CD-CODE" id="91857CE7">
    <property type="entry name" value="Nucleolus"/>
</dbReference>
<dbReference type="ChiTaRS" id="TOMM40">
    <property type="organism name" value="human"/>
</dbReference>
<dbReference type="GeneWiki" id="TOMM40"/>
<dbReference type="GenomeRNAi" id="10452"/>
<dbReference type="Pharos" id="O96008">
    <property type="development level" value="Tbio"/>
</dbReference>
<dbReference type="PRO" id="PR:O96008"/>
<dbReference type="Proteomes" id="UP000005640">
    <property type="component" value="Chromosome 19"/>
</dbReference>
<dbReference type="RNAct" id="O96008">
    <property type="molecule type" value="protein"/>
</dbReference>
<dbReference type="Bgee" id="ENSG00000130204">
    <property type="expression patterns" value="Expressed in olfactory bulb and 210 other cell types or tissues"/>
</dbReference>
<dbReference type="ExpressionAtlas" id="O96008">
    <property type="expression patterns" value="baseline and differential"/>
</dbReference>
<dbReference type="GO" id="GO:0005829">
    <property type="term" value="C:cytosol"/>
    <property type="evidence" value="ECO:0000314"/>
    <property type="project" value="HPA"/>
</dbReference>
<dbReference type="GO" id="GO:0016020">
    <property type="term" value="C:membrane"/>
    <property type="evidence" value="ECO:0000314"/>
    <property type="project" value="BHF-UCL"/>
</dbReference>
<dbReference type="GO" id="GO:0044233">
    <property type="term" value="C:mitochondria-associated endoplasmic reticulum membrane contact site"/>
    <property type="evidence" value="ECO:0000314"/>
    <property type="project" value="UniProtKB"/>
</dbReference>
<dbReference type="GO" id="GO:0005743">
    <property type="term" value="C:mitochondrial inner membrane"/>
    <property type="evidence" value="ECO:0000314"/>
    <property type="project" value="CAFA"/>
</dbReference>
<dbReference type="GO" id="GO:0005741">
    <property type="term" value="C:mitochondrial outer membrane"/>
    <property type="evidence" value="ECO:0000250"/>
    <property type="project" value="BHF-UCL"/>
</dbReference>
<dbReference type="GO" id="GO:0005742">
    <property type="term" value="C:mitochondrial outer membrane translocase complex"/>
    <property type="evidence" value="ECO:0000314"/>
    <property type="project" value="BHF-UCL"/>
</dbReference>
<dbReference type="GO" id="GO:0005739">
    <property type="term" value="C:mitochondrion"/>
    <property type="evidence" value="ECO:0000314"/>
    <property type="project" value="HPA"/>
</dbReference>
<dbReference type="GO" id="GO:0046930">
    <property type="term" value="C:pore complex"/>
    <property type="evidence" value="ECO:0007669"/>
    <property type="project" value="UniProtKB-KW"/>
</dbReference>
<dbReference type="GO" id="GO:0140596">
    <property type="term" value="C:TOM complex"/>
    <property type="evidence" value="ECO:0000303"/>
    <property type="project" value="ComplexPortal"/>
</dbReference>
<dbReference type="GO" id="GO:0015288">
    <property type="term" value="F:porin activity"/>
    <property type="evidence" value="ECO:0007669"/>
    <property type="project" value="UniProtKB-KW"/>
</dbReference>
<dbReference type="GO" id="GO:0008320">
    <property type="term" value="F:protein transmembrane transporter activity"/>
    <property type="evidence" value="ECO:0000250"/>
    <property type="project" value="BHF-UCL"/>
</dbReference>
<dbReference type="GO" id="GO:0006811">
    <property type="term" value="P:monoatomic ion transport"/>
    <property type="evidence" value="ECO:0007669"/>
    <property type="project" value="UniProtKB-KW"/>
</dbReference>
<dbReference type="GO" id="GO:0030150">
    <property type="term" value="P:protein import into mitochondrial matrix"/>
    <property type="evidence" value="ECO:0000315"/>
    <property type="project" value="UniProtKB"/>
</dbReference>
<dbReference type="GO" id="GO:0045040">
    <property type="term" value="P:protein insertion into mitochondrial outer membrane"/>
    <property type="evidence" value="ECO:0000303"/>
    <property type="project" value="ComplexPortal"/>
</dbReference>
<dbReference type="GO" id="GO:0006626">
    <property type="term" value="P:protein targeting to mitochondrion"/>
    <property type="evidence" value="ECO:0000316"/>
    <property type="project" value="UniProtKB"/>
</dbReference>
<dbReference type="CDD" id="cd07305">
    <property type="entry name" value="Porin3_Tom40"/>
    <property type="match status" value="1"/>
</dbReference>
<dbReference type="FunFam" id="2.40.160.10:FF:000005">
    <property type="entry name" value="mitochondrial import receptor subunit TOM40 homolog"/>
    <property type="match status" value="1"/>
</dbReference>
<dbReference type="Gene3D" id="2.40.160.10">
    <property type="entry name" value="Porin"/>
    <property type="match status" value="1"/>
</dbReference>
<dbReference type="InterPro" id="IPR023614">
    <property type="entry name" value="Porin_dom_sf"/>
</dbReference>
<dbReference type="InterPro" id="IPR027246">
    <property type="entry name" value="Porin_Euk/Tom40"/>
</dbReference>
<dbReference type="InterPro" id="IPR037930">
    <property type="entry name" value="Tom40"/>
</dbReference>
<dbReference type="PANTHER" id="PTHR10802">
    <property type="entry name" value="MITOCHONDRIAL IMPORT RECEPTOR SUBUNIT TOM40"/>
    <property type="match status" value="1"/>
</dbReference>
<dbReference type="Pfam" id="PF01459">
    <property type="entry name" value="Porin_3"/>
    <property type="match status" value="1"/>
</dbReference>
<gene>
    <name type="primary">TOMM40</name>
    <name type="synonym">C19orf1</name>
    <name type="synonym">PEREC1</name>
    <name type="synonym">TOM40</name>
</gene>
<name>TOM40_HUMAN</name>
<reference key="1">
    <citation type="journal article" date="1998" name="DNA Seq.">
        <title>Sequencing of 42kb of the APO E-C2 gene cluster reveals a new gene: PEREC1.</title>
        <authorList>
            <person name="Freitas E.M."/>
            <person name="Zhang W.J."/>
            <person name="Lalonde J.P."/>
            <person name="Tay G.K."/>
            <person name="Gaudieri S."/>
            <person name="Ashworth L.K."/>
            <person name="Van Bockxmeer F.M."/>
            <person name="Dawkins R.L."/>
        </authorList>
    </citation>
    <scope>NUCLEOTIDE SEQUENCE [GENOMIC DNA]</scope>
</reference>
<reference key="2">
    <citation type="submission" date="1998-01" db="EMBL/GenBank/DDBJ databases">
        <title>A transcriptional map in the region of 19q13 derived using direct sequencing and exon trapping.</title>
        <authorList>
            <person name="Yoshiura K."/>
            <person name="Murray J.C."/>
        </authorList>
    </citation>
    <scope>NUCLEOTIDE SEQUENCE [GENOMIC DNA / MRNA] (ISOFORM 1)</scope>
</reference>
<reference key="3">
    <citation type="journal article" date="2001" name="Int. J. Cancer">
        <title>Genetic identity and differential expression of p38.5 (Haymaker) in human malignant and non-malignant cells.</title>
        <authorList>
            <person name="Das B."/>
            <person name="Tao S.-Z."/>
            <person name="Mushnitsky R."/>
            <person name="Norin A.J."/>
        </authorList>
    </citation>
    <scope>NUCLEOTIDE SEQUENCE [MRNA] (ISOFORM 1)</scope>
    <source>
        <tissue>Lymphocyte</tissue>
    </source>
</reference>
<reference key="4">
    <citation type="submission" date="2005-07" db="EMBL/GenBank/DDBJ databases">
        <authorList>
            <person name="Mural R.J."/>
            <person name="Istrail S."/>
            <person name="Sutton G.G."/>
            <person name="Florea L."/>
            <person name="Halpern A.L."/>
            <person name="Mobarry C.M."/>
            <person name="Lippert R."/>
            <person name="Walenz B."/>
            <person name="Shatkay H."/>
            <person name="Dew I."/>
            <person name="Miller J.R."/>
            <person name="Flanigan M.J."/>
            <person name="Edwards N.J."/>
            <person name="Bolanos R."/>
            <person name="Fasulo D."/>
            <person name="Halldorsson B.V."/>
            <person name="Hannenhalli S."/>
            <person name="Turner R."/>
            <person name="Yooseph S."/>
            <person name="Lu F."/>
            <person name="Nusskern D.R."/>
            <person name="Shue B.C."/>
            <person name="Zheng X.H."/>
            <person name="Zhong F."/>
            <person name="Delcher A.L."/>
            <person name="Huson D.H."/>
            <person name="Kravitz S.A."/>
            <person name="Mouchard L."/>
            <person name="Reinert K."/>
            <person name="Remington K.A."/>
            <person name="Clark A.G."/>
            <person name="Waterman M.S."/>
            <person name="Eichler E.E."/>
            <person name="Adams M.D."/>
            <person name="Hunkapiller M.W."/>
            <person name="Myers E.W."/>
            <person name="Venter J.C."/>
        </authorList>
    </citation>
    <scope>NUCLEOTIDE SEQUENCE [LARGE SCALE GENOMIC DNA]</scope>
</reference>
<reference key="5">
    <citation type="journal article" date="2004" name="Genome Res.">
        <title>The status, quality, and expansion of the NIH full-length cDNA project: the Mammalian Gene Collection (MGC).</title>
        <authorList>
            <consortium name="The MGC Project Team"/>
        </authorList>
    </citation>
    <scope>NUCLEOTIDE SEQUENCE [LARGE SCALE MRNA] (ISOFORMS 1 AND 2)</scope>
    <source>
        <tissue>Eye</tissue>
        <tissue>Lung</tissue>
        <tissue>Skin</tissue>
        <tissue>Testis</tissue>
        <tissue>Uterus</tissue>
    </source>
</reference>
<reference key="6">
    <citation type="submission" date="2007-03" db="UniProtKB">
        <authorList>
            <person name="Lubec G."/>
            <person name="Vishwanath V."/>
        </authorList>
    </citation>
    <scope>PROTEIN SEQUENCE OF 185-195 AND 332-348</scope>
    <scope>IDENTIFICATION BY MASS SPECTROMETRY</scope>
    <source>
        <tissue>Brain</tissue>
        <tissue>Cajal-Retzius cell</tissue>
    </source>
</reference>
<reference key="7">
    <citation type="journal article" date="2002" name="J. Biol. Chem.">
        <title>Insertion and assembly of human tom7 into the preprotein translocase complex of the outer mitochondrial membrane.</title>
        <authorList>
            <person name="Johnston A.J."/>
            <person name="Hoogenraad J."/>
            <person name="Dougan D.A."/>
            <person name="Truscott K.N."/>
            <person name="Yano M."/>
            <person name="Mori M."/>
            <person name="Hoogenraad N.J."/>
            <person name="Ryan M.T."/>
        </authorList>
    </citation>
    <scope>IDENTIFICATION IN THE TOM COMPLEX WITH TOMM7; TOMM20 AND TOMM22</scope>
</reference>
<reference key="8">
    <citation type="journal article" date="2005" name="J. Biol. Chem.">
        <title>Dissection of the mitochondrial import and assembly pathway for human Tom40.</title>
        <authorList>
            <person name="Humphries A.D."/>
            <person name="Streimann I.C."/>
            <person name="Stojanovski D."/>
            <person name="Johnston A.J."/>
            <person name="Yano M."/>
            <person name="Hoogenraad N.J."/>
            <person name="Ryan M.T."/>
        </authorList>
    </citation>
    <scope>FUNCTION</scope>
    <scope>SUBCELLULAR LOCATION</scope>
    <scope>IDENTIFICATION IN THE TOM COMPLEX WITH TOMM20; TOMM22 AND TOMM70</scope>
</reference>
<reference key="9">
    <citation type="journal article" date="2008" name="Biochem. Biophys. Res. Commun.">
        <title>Identification of Tom5 and Tom6 in the preprotein translocase complex of human mitochondrial outer membrane.</title>
        <authorList>
            <person name="Kato H."/>
            <person name="Mihara K."/>
        </authorList>
    </citation>
    <scope>IDENTIFICATION IN THE TOM COMPLEX</scope>
</reference>
<reference key="10">
    <citation type="journal article" date="2011" name="BMC Syst. Biol.">
        <title>Initial characterization of the human central proteome.</title>
        <authorList>
            <person name="Burkard T.R."/>
            <person name="Planyavsky M."/>
            <person name="Kaupe I."/>
            <person name="Breitwieser F.P."/>
            <person name="Buerckstuemmer T."/>
            <person name="Bennett K.L."/>
            <person name="Superti-Furga G."/>
            <person name="Colinge J."/>
        </authorList>
    </citation>
    <scope>IDENTIFICATION BY MASS SPECTROMETRY [LARGE SCALE ANALYSIS]</scope>
</reference>
<reference key="11">
    <citation type="journal article" date="2014" name="J. Proteomics">
        <title>An enzyme assisted RP-RPLC approach for in-depth analysis of human liver phosphoproteome.</title>
        <authorList>
            <person name="Bian Y."/>
            <person name="Song C."/>
            <person name="Cheng K."/>
            <person name="Dong M."/>
            <person name="Wang F."/>
            <person name="Huang J."/>
            <person name="Sun D."/>
            <person name="Wang L."/>
            <person name="Ye M."/>
            <person name="Zou H."/>
        </authorList>
    </citation>
    <scope>IDENTIFICATION BY MASS SPECTROMETRY [LARGE SCALE ANALYSIS]</scope>
    <source>
        <tissue>Liver</tissue>
    </source>
</reference>
<reference key="12">
    <citation type="journal article" date="2015" name="Proteomics">
        <title>N-terminome analysis of the human mitochondrial proteome.</title>
        <authorList>
            <person name="Vaca Jacome A.S."/>
            <person name="Rabilloud T."/>
            <person name="Schaeffer-Reiss C."/>
            <person name="Rompais M."/>
            <person name="Ayoub D."/>
            <person name="Lane L."/>
            <person name="Bairoch A."/>
            <person name="Van Dorsselaer A."/>
            <person name="Carapito C."/>
        </authorList>
    </citation>
    <scope>IDENTIFICATION BY MASS SPECTROMETRY [LARGE SCALE ANALYSIS]</scope>
</reference>
<reference key="13">
    <citation type="journal article" date="2016" name="Elife">
        <title>Tim29 is a novel subunit of the human TIM22 translocase and is involved in complex assembly and stability.</title>
        <authorList>
            <person name="Kang Y."/>
            <person name="Baker M.J."/>
            <person name="Liem M."/>
            <person name="Louber J."/>
            <person name="McKenzie M."/>
            <person name="Atukorala I."/>
            <person name="Ang C.S."/>
            <person name="Keerthikumar S."/>
            <person name="Mathivanan S."/>
            <person name="Stojanovski D."/>
        </authorList>
    </citation>
    <scope>INTERACTION WITH TIMM29</scope>
</reference>
<reference key="14">
    <citation type="journal article" date="2019" name="Sci. Adv.">
        <title>BAP31 regulates mitochondrial function via interaction with Tom40 within ER-mitochondria contact sites.</title>
        <authorList>
            <person name="Namba T."/>
        </authorList>
    </citation>
    <scope>FUNCTION</scope>
    <scope>INTERACTION WITH BCAP31 AND NDUFS4</scope>
    <scope>SUBCELLULAR LOCATION</scope>
</reference>
<proteinExistence type="evidence at protein level"/>
<organism>
    <name type="scientific">Homo sapiens</name>
    <name type="common">Human</name>
    <dbReference type="NCBI Taxonomy" id="9606"/>
    <lineage>
        <taxon>Eukaryota</taxon>
        <taxon>Metazoa</taxon>
        <taxon>Chordata</taxon>
        <taxon>Craniata</taxon>
        <taxon>Vertebrata</taxon>
        <taxon>Euteleostomi</taxon>
        <taxon>Mammalia</taxon>
        <taxon>Eutheria</taxon>
        <taxon>Euarchontoglires</taxon>
        <taxon>Primates</taxon>
        <taxon>Haplorrhini</taxon>
        <taxon>Catarrhini</taxon>
        <taxon>Hominidae</taxon>
        <taxon>Homo</taxon>
    </lineage>
</organism>
<protein>
    <recommendedName>
        <fullName>Mitochondrial import receptor subunit TOM40 homolog</fullName>
    </recommendedName>
    <alternativeName>
        <fullName>Protein Haymaker</fullName>
    </alternativeName>
    <alternativeName>
        <fullName>Translocase of outer membrane 40 kDa subunit homolog</fullName>
    </alternativeName>
    <alternativeName>
        <fullName>p38.5</fullName>
    </alternativeName>
</protein>
<evidence type="ECO:0000250" key="1">
    <source>
        <dbReference type="UniProtKB" id="Q75Q40"/>
    </source>
</evidence>
<evidence type="ECO:0000255" key="2"/>
<evidence type="ECO:0000256" key="3">
    <source>
        <dbReference type="SAM" id="MobiDB-lite"/>
    </source>
</evidence>
<evidence type="ECO:0000269" key="4">
    <source>
    </source>
</evidence>
<evidence type="ECO:0000269" key="5">
    <source>
    </source>
</evidence>
<evidence type="ECO:0000269" key="6">
    <source>
    </source>
</evidence>
<evidence type="ECO:0000269" key="7">
    <source>
    </source>
</evidence>
<evidence type="ECO:0000269" key="8">
    <source>
    </source>
</evidence>
<evidence type="ECO:0000303" key="9">
    <source>
    </source>
</evidence>
<evidence type="ECO:0000305" key="10"/>
<evidence type="ECO:0007829" key="11">
    <source>
        <dbReference type="PDB" id="7CP9"/>
    </source>
</evidence>
<evidence type="ECO:0007829" key="12">
    <source>
        <dbReference type="PDB" id="7VBY"/>
    </source>
</evidence>
<evidence type="ECO:0007829" key="13">
    <source>
        <dbReference type="PDB" id="7VD2"/>
    </source>
</evidence>
<accession>O96008</accession>
<accession>A0A024R0P9</accession>
<accession>Q86VW4</accession>
<accession>Q8WY09</accession>
<accession>Q8WY10</accession>
<accession>Q8WY11</accession>
<accession>Q9BR95</accession>
<keyword id="KW-0002">3D-structure</keyword>
<keyword id="KW-0025">Alternative splicing</keyword>
<keyword id="KW-0903">Direct protein sequencing</keyword>
<keyword id="KW-0406">Ion transport</keyword>
<keyword id="KW-0472">Membrane</keyword>
<keyword id="KW-0496">Mitochondrion</keyword>
<keyword id="KW-1000">Mitochondrion outer membrane</keyword>
<keyword id="KW-0626">Porin</keyword>
<keyword id="KW-0653">Protein transport</keyword>
<keyword id="KW-1267">Proteomics identification</keyword>
<keyword id="KW-1185">Reference proteome</keyword>
<keyword id="KW-0812">Transmembrane</keyword>
<keyword id="KW-1134">Transmembrane beta strand</keyword>
<keyword id="KW-0813">Transport</keyword>
<comment type="function">
    <text evidence="5 8">Channel-forming protein essential for import of protein precursors into mitochondria (PubMed:15644312, PubMed:31206022). Plays a role in the assembly of the mitochondrial membrane respiratory chain NADH dehydrogenase (Complex I) by forming a complex with BCAP31 and mediating the translocation of Complex I components from the cytosol to the mitochondria (PubMed:31206022).</text>
</comment>
<comment type="subunit">
    <text evidence="1 4 5 6 7 8">Forms part of the preprotein translocase complex of the outer mitochondrial membrane (TOM complex) which consists of at least 7 different proteins (TOMM5, TOMM6, TOMM7, TOMM20, TOMM22, TOMM40 and TOMM70). Interacts with mitochondrial targeting sequences (PubMed:12198123, PubMed:15644312, PubMed:18331822). Interacts with TIMM29; linking the TIM22 complex to the TOM complex (PubMed:27554484). Forms a complex with BCAP31 (via C-terminus) which mediates the translocation of components of the mitochondrial membrane respiratory chain NADH dehydrogenase (Complex I) from the cytosol to the mitochondria (PubMed:31206022). Interacts (via N-terminus) with CYP1A1 (via mitochondrial targeting signal); this interaction is required for CYP1A1 translocation across the mitochondrial outer membrane (By similarity).</text>
</comment>
<comment type="interaction">
    <interactant intactId="EBI-1057581">
        <id>O96008</id>
    </interactant>
    <interactant intactId="EBI-2514077">
        <id>Q2TAZ0</id>
        <label>ATG2A</label>
    </interactant>
    <organismsDiffer>false</organismsDiffer>
    <experiments>7</experiments>
</comment>
<comment type="subcellular location">
    <subcellularLocation>
        <location evidence="5 8">Mitochondrion outer membrane</location>
        <topology evidence="2">Multi-pass membrane protein</topology>
    </subcellularLocation>
    <text evidence="8">Associates with the mitochondria-associated ER membrane via interaction with BCAP31.</text>
</comment>
<comment type="alternative products">
    <event type="alternative splicing"/>
    <isoform>
        <id>O96008-1</id>
        <name>1</name>
        <sequence type="displayed"/>
    </isoform>
    <isoform>
        <id>O96008-2</id>
        <name>2</name>
        <sequence type="described" ref="VSP_008589 VSP_008590"/>
    </isoform>
</comment>
<comment type="similarity">
    <text evidence="10">Belongs to the Tom40 family.</text>
</comment>